<reference key="1">
    <citation type="journal article" date="1999" name="Nature">
        <title>Sequence and analysis of chromosome 4 of the plant Arabidopsis thaliana.</title>
        <authorList>
            <person name="Mayer K.F.X."/>
            <person name="Schueller C."/>
            <person name="Wambutt R."/>
            <person name="Murphy G."/>
            <person name="Volckaert G."/>
            <person name="Pohl T."/>
            <person name="Duesterhoeft A."/>
            <person name="Stiekema W."/>
            <person name="Entian K.-D."/>
            <person name="Terryn N."/>
            <person name="Harris B."/>
            <person name="Ansorge W."/>
            <person name="Brandt P."/>
            <person name="Grivell L.A."/>
            <person name="Rieger M."/>
            <person name="Weichselgartner M."/>
            <person name="de Simone V."/>
            <person name="Obermaier B."/>
            <person name="Mache R."/>
            <person name="Mueller M."/>
            <person name="Kreis M."/>
            <person name="Delseny M."/>
            <person name="Puigdomenech P."/>
            <person name="Watson M."/>
            <person name="Schmidtheini T."/>
            <person name="Reichert B."/>
            <person name="Portetelle D."/>
            <person name="Perez-Alonso M."/>
            <person name="Boutry M."/>
            <person name="Bancroft I."/>
            <person name="Vos P."/>
            <person name="Hoheisel J."/>
            <person name="Zimmermann W."/>
            <person name="Wedler H."/>
            <person name="Ridley P."/>
            <person name="Langham S.-A."/>
            <person name="McCullagh B."/>
            <person name="Bilham L."/>
            <person name="Robben J."/>
            <person name="van der Schueren J."/>
            <person name="Grymonprez B."/>
            <person name="Chuang Y.-J."/>
            <person name="Vandenbussche F."/>
            <person name="Braeken M."/>
            <person name="Weltjens I."/>
            <person name="Voet M."/>
            <person name="Bastiaens I."/>
            <person name="Aert R."/>
            <person name="Defoor E."/>
            <person name="Weitzenegger T."/>
            <person name="Bothe G."/>
            <person name="Ramsperger U."/>
            <person name="Hilbert H."/>
            <person name="Braun M."/>
            <person name="Holzer E."/>
            <person name="Brandt A."/>
            <person name="Peters S."/>
            <person name="van Staveren M."/>
            <person name="Dirkse W."/>
            <person name="Mooijman P."/>
            <person name="Klein Lankhorst R."/>
            <person name="Rose M."/>
            <person name="Hauf J."/>
            <person name="Koetter P."/>
            <person name="Berneiser S."/>
            <person name="Hempel S."/>
            <person name="Feldpausch M."/>
            <person name="Lamberth S."/>
            <person name="Van den Daele H."/>
            <person name="De Keyser A."/>
            <person name="Buysshaert C."/>
            <person name="Gielen J."/>
            <person name="Villarroel R."/>
            <person name="De Clercq R."/>
            <person name="van Montagu M."/>
            <person name="Rogers J."/>
            <person name="Cronin A."/>
            <person name="Quail M.A."/>
            <person name="Bray-Allen S."/>
            <person name="Clark L."/>
            <person name="Doggett J."/>
            <person name="Hall S."/>
            <person name="Kay M."/>
            <person name="Lennard N."/>
            <person name="McLay K."/>
            <person name="Mayes R."/>
            <person name="Pettett A."/>
            <person name="Rajandream M.A."/>
            <person name="Lyne M."/>
            <person name="Benes V."/>
            <person name="Rechmann S."/>
            <person name="Borkova D."/>
            <person name="Bloecker H."/>
            <person name="Scharfe M."/>
            <person name="Grimm M."/>
            <person name="Loehnert T.-H."/>
            <person name="Dose S."/>
            <person name="de Haan M."/>
            <person name="Maarse A.C."/>
            <person name="Schaefer M."/>
            <person name="Mueller-Auer S."/>
            <person name="Gabel C."/>
            <person name="Fuchs M."/>
            <person name="Fartmann B."/>
            <person name="Granderath K."/>
            <person name="Dauner D."/>
            <person name="Herzl A."/>
            <person name="Neumann S."/>
            <person name="Argiriou A."/>
            <person name="Vitale D."/>
            <person name="Liguori R."/>
            <person name="Piravandi E."/>
            <person name="Massenet O."/>
            <person name="Quigley F."/>
            <person name="Clabauld G."/>
            <person name="Muendlein A."/>
            <person name="Felber R."/>
            <person name="Schnabl S."/>
            <person name="Hiller R."/>
            <person name="Schmidt W."/>
            <person name="Lecharny A."/>
            <person name="Aubourg S."/>
            <person name="Chefdor F."/>
            <person name="Cooke R."/>
            <person name="Berger C."/>
            <person name="Monfort A."/>
            <person name="Casacuberta E."/>
            <person name="Gibbons T."/>
            <person name="Weber N."/>
            <person name="Vandenbol M."/>
            <person name="Bargues M."/>
            <person name="Terol J."/>
            <person name="Torres A."/>
            <person name="Perez-Perez A."/>
            <person name="Purnelle B."/>
            <person name="Bent E."/>
            <person name="Johnson S."/>
            <person name="Tacon D."/>
            <person name="Jesse T."/>
            <person name="Heijnen L."/>
            <person name="Schwarz S."/>
            <person name="Scholler P."/>
            <person name="Heber S."/>
            <person name="Francs P."/>
            <person name="Bielke C."/>
            <person name="Frishman D."/>
            <person name="Haase D."/>
            <person name="Lemcke K."/>
            <person name="Mewes H.-W."/>
            <person name="Stocker S."/>
            <person name="Zaccaria P."/>
            <person name="Bevan M."/>
            <person name="Wilson R.K."/>
            <person name="de la Bastide M."/>
            <person name="Habermann K."/>
            <person name="Parnell L."/>
            <person name="Dedhia N."/>
            <person name="Gnoj L."/>
            <person name="Schutz K."/>
            <person name="Huang E."/>
            <person name="Spiegel L."/>
            <person name="Sekhon M."/>
            <person name="Murray J."/>
            <person name="Sheet P."/>
            <person name="Cordes M."/>
            <person name="Abu-Threideh J."/>
            <person name="Stoneking T."/>
            <person name="Kalicki J."/>
            <person name="Graves T."/>
            <person name="Harmon G."/>
            <person name="Edwards J."/>
            <person name="Latreille P."/>
            <person name="Courtney L."/>
            <person name="Cloud J."/>
            <person name="Abbott A."/>
            <person name="Scott K."/>
            <person name="Johnson D."/>
            <person name="Minx P."/>
            <person name="Bentley D."/>
            <person name="Fulton B."/>
            <person name="Miller N."/>
            <person name="Greco T."/>
            <person name="Kemp K."/>
            <person name="Kramer J."/>
            <person name="Fulton L."/>
            <person name="Mardis E."/>
            <person name="Dante M."/>
            <person name="Pepin K."/>
            <person name="Hillier L.W."/>
            <person name="Nelson J."/>
            <person name="Spieth J."/>
            <person name="Ryan E."/>
            <person name="Andrews S."/>
            <person name="Geisel C."/>
            <person name="Layman D."/>
            <person name="Du H."/>
            <person name="Ali J."/>
            <person name="Berghoff A."/>
            <person name="Jones K."/>
            <person name="Drone K."/>
            <person name="Cotton M."/>
            <person name="Joshu C."/>
            <person name="Antonoiu B."/>
            <person name="Zidanic M."/>
            <person name="Strong C."/>
            <person name="Sun H."/>
            <person name="Lamar B."/>
            <person name="Yordan C."/>
            <person name="Ma P."/>
            <person name="Zhong J."/>
            <person name="Preston R."/>
            <person name="Vil D."/>
            <person name="Shekher M."/>
            <person name="Matero A."/>
            <person name="Shah R."/>
            <person name="Swaby I.K."/>
            <person name="O'Shaughnessy A."/>
            <person name="Rodriguez M."/>
            <person name="Hoffman J."/>
            <person name="Till S."/>
            <person name="Granat S."/>
            <person name="Shohdy N."/>
            <person name="Hasegawa A."/>
            <person name="Hameed A."/>
            <person name="Lodhi M."/>
            <person name="Johnson A."/>
            <person name="Chen E."/>
            <person name="Marra M.A."/>
            <person name="Martienssen R."/>
            <person name="McCombie W.R."/>
        </authorList>
    </citation>
    <scope>NUCLEOTIDE SEQUENCE [LARGE SCALE GENOMIC DNA]</scope>
    <source>
        <strain>cv. Columbia</strain>
    </source>
</reference>
<reference key="2">
    <citation type="journal article" date="2017" name="Plant J.">
        <title>Araport11: a complete reannotation of the Arabidopsis thaliana reference genome.</title>
        <authorList>
            <person name="Cheng C.Y."/>
            <person name="Krishnakumar V."/>
            <person name="Chan A.P."/>
            <person name="Thibaud-Nissen F."/>
            <person name="Schobel S."/>
            <person name="Town C.D."/>
        </authorList>
    </citation>
    <scope>GENOME REANNOTATION</scope>
    <source>
        <strain>cv. Columbia</strain>
    </source>
</reference>
<gene>
    <name type="primary">FOLD3</name>
    <name type="synonym">DHC3</name>
    <name type="ordered locus">At4g00600</name>
    <name type="ORF">F6N23.28</name>
</gene>
<accession>O65269</accession>
<feature type="transit peptide" description="Chloroplast" evidence="2">
    <location>
        <begin position="1"/>
        <end position="48"/>
    </location>
</feature>
<feature type="chain" id="PRO_0000424346" description="Bifunctional protein FolD 3, chloroplastic">
    <location>
        <begin position="49"/>
        <end position="310"/>
    </location>
</feature>
<sequence length="310" mass="33696">MFTDCSSSTTSRLIHLYNRNGVFLPRPSVSQFSLRTTASTWRCTLSIRSSSSPSAIVIDGKAEAKKIRDDIKIEVSRMKESIGVVPAEDSSEEEVLKYVSGFNDDPSVHGVLVQLPLPSHMDEQNILNAVSIEKDVDGFHPLNIGRLAMRGREPLFVPCTPKGCIELLHRYNIEFKGKRAVVIGRSNIVGMPAALLLQKEDATVSIIHSRTMNPEELTRQADILISAVGKPNMVRGSWIKPGAVLIDVGIKPVEDPSAAGGERLVGDICYVEASKIASAITPVPGDVGPMTIAMLLSNTLTSAKRIHNFQ</sequence>
<organism>
    <name type="scientific">Arabidopsis thaliana</name>
    <name type="common">Mouse-ear cress</name>
    <dbReference type="NCBI Taxonomy" id="3702"/>
    <lineage>
        <taxon>Eukaryota</taxon>
        <taxon>Viridiplantae</taxon>
        <taxon>Streptophyta</taxon>
        <taxon>Embryophyta</taxon>
        <taxon>Tracheophyta</taxon>
        <taxon>Spermatophyta</taxon>
        <taxon>Magnoliopsida</taxon>
        <taxon>eudicotyledons</taxon>
        <taxon>Gunneridae</taxon>
        <taxon>Pentapetalae</taxon>
        <taxon>rosids</taxon>
        <taxon>malvids</taxon>
        <taxon>Brassicales</taxon>
        <taxon>Brassicaceae</taxon>
        <taxon>Camelineae</taxon>
        <taxon>Arabidopsis</taxon>
    </lineage>
</organism>
<protein>
    <recommendedName>
        <fullName>Bifunctional protein FolD 3, chloroplastic</fullName>
    </recommendedName>
    <alternativeName>
        <fullName>Tetrahydrofolate dehydrogenase/cyclohydrolase 3</fullName>
    </alternativeName>
    <domain>
        <recommendedName>
            <fullName>Methylenetetrahydrofolate dehydrogenase</fullName>
            <ecNumber>1.5.1.5</ecNumber>
        </recommendedName>
    </domain>
    <domain>
        <recommendedName>
            <fullName>Methenyltetrahydrofolate cyclohydrolase</fullName>
            <ecNumber>3.5.4.9</ecNumber>
        </recommendedName>
    </domain>
</protein>
<comment type="function">
    <text evidence="1">Catalyzes the oxidation of 5,10-methylenetetrahydrofolate to 5,10-methenyltetrahydrofolate and then the hydrolysis of 5,10-methenyltetrahydrofolate to 10-formyltetrahydrofolate.</text>
</comment>
<comment type="catalytic activity">
    <reaction>
        <text>(6R)-5,10-methylene-5,6,7,8-tetrahydrofolate + NADP(+) = (6R)-5,10-methenyltetrahydrofolate + NADPH</text>
        <dbReference type="Rhea" id="RHEA:22812"/>
        <dbReference type="ChEBI" id="CHEBI:15636"/>
        <dbReference type="ChEBI" id="CHEBI:57455"/>
        <dbReference type="ChEBI" id="CHEBI:57783"/>
        <dbReference type="ChEBI" id="CHEBI:58349"/>
        <dbReference type="EC" id="1.5.1.5"/>
    </reaction>
</comment>
<comment type="catalytic activity">
    <reaction>
        <text>(6R)-5,10-methenyltetrahydrofolate + H2O = (6R)-10-formyltetrahydrofolate + H(+)</text>
        <dbReference type="Rhea" id="RHEA:23700"/>
        <dbReference type="ChEBI" id="CHEBI:15377"/>
        <dbReference type="ChEBI" id="CHEBI:15378"/>
        <dbReference type="ChEBI" id="CHEBI:57455"/>
        <dbReference type="ChEBI" id="CHEBI:195366"/>
        <dbReference type="EC" id="3.5.4.9"/>
    </reaction>
</comment>
<comment type="pathway">
    <text>One-carbon metabolism; tetrahydrofolate interconversion.</text>
</comment>
<comment type="subunit">
    <text evidence="1">Homodimer.</text>
</comment>
<comment type="subcellular location">
    <subcellularLocation>
        <location evidence="3">Plastid</location>
        <location evidence="3">Chloroplast</location>
    </subcellularLocation>
</comment>
<comment type="similarity">
    <text evidence="3">Belongs to the tetrahydrofolate dehydrogenase/cyclohydrolase family.</text>
</comment>
<name>FOLD3_ARATH</name>
<dbReference type="EC" id="1.5.1.5"/>
<dbReference type="EC" id="3.5.4.9"/>
<dbReference type="EMBL" id="AF058919">
    <property type="protein sequence ID" value="AAC13632.1"/>
    <property type="molecule type" value="Genomic_DNA"/>
</dbReference>
<dbReference type="EMBL" id="AL161472">
    <property type="protein sequence ID" value="CAB80869.1"/>
    <property type="molecule type" value="Genomic_DNA"/>
</dbReference>
<dbReference type="EMBL" id="CP002687">
    <property type="protein sequence ID" value="AEE81908.1"/>
    <property type="molecule type" value="Genomic_DNA"/>
</dbReference>
<dbReference type="PIR" id="T01224">
    <property type="entry name" value="T01224"/>
</dbReference>
<dbReference type="RefSeq" id="NP_191969.1">
    <property type="nucleotide sequence ID" value="NM_116285.1"/>
</dbReference>
<dbReference type="SMR" id="O65269"/>
<dbReference type="BioGRID" id="11124">
    <property type="interactions" value="16"/>
</dbReference>
<dbReference type="FunCoup" id="O65269">
    <property type="interactions" value="730"/>
</dbReference>
<dbReference type="STRING" id="3702.O65269"/>
<dbReference type="PaxDb" id="3702-AT4G00600.1"/>
<dbReference type="EnsemblPlants" id="AT4G00600.1">
    <property type="protein sequence ID" value="AT4G00600.1"/>
    <property type="gene ID" value="AT4G00600"/>
</dbReference>
<dbReference type="GeneID" id="825813"/>
<dbReference type="Gramene" id="AT4G00600.1">
    <property type="protein sequence ID" value="AT4G00600.1"/>
    <property type="gene ID" value="AT4G00600"/>
</dbReference>
<dbReference type="KEGG" id="ath:AT4G00600"/>
<dbReference type="Araport" id="AT4G00600"/>
<dbReference type="TAIR" id="AT4G00600"/>
<dbReference type="eggNOG" id="KOG0089">
    <property type="taxonomic scope" value="Eukaryota"/>
</dbReference>
<dbReference type="HOGENOM" id="CLU_034045_1_2_1"/>
<dbReference type="InParanoid" id="O65269"/>
<dbReference type="OMA" id="GIVRPEH"/>
<dbReference type="PhylomeDB" id="O65269"/>
<dbReference type="BioCyc" id="ARA:AT4G00600-MONOMER"/>
<dbReference type="UniPathway" id="UPA00193"/>
<dbReference type="PRO" id="PR:O65269"/>
<dbReference type="Proteomes" id="UP000006548">
    <property type="component" value="Chromosome 4"/>
</dbReference>
<dbReference type="ExpressionAtlas" id="O65269">
    <property type="expression patterns" value="baseline and differential"/>
</dbReference>
<dbReference type="GO" id="GO:0009507">
    <property type="term" value="C:chloroplast"/>
    <property type="evidence" value="ECO:0007669"/>
    <property type="project" value="UniProtKB-SubCell"/>
</dbReference>
<dbReference type="GO" id="GO:0004477">
    <property type="term" value="F:methenyltetrahydrofolate cyclohydrolase activity"/>
    <property type="evidence" value="ECO:0007669"/>
    <property type="project" value="UniProtKB-EC"/>
</dbReference>
<dbReference type="GO" id="GO:0004488">
    <property type="term" value="F:methylenetetrahydrofolate dehydrogenase (NADP+) activity"/>
    <property type="evidence" value="ECO:0007669"/>
    <property type="project" value="UniProtKB-EC"/>
</dbReference>
<dbReference type="GO" id="GO:0009853">
    <property type="term" value="P:photorespiration"/>
    <property type="evidence" value="ECO:0007669"/>
    <property type="project" value="UniProtKB-KW"/>
</dbReference>
<dbReference type="GO" id="GO:0035999">
    <property type="term" value="P:tetrahydrofolate interconversion"/>
    <property type="evidence" value="ECO:0007669"/>
    <property type="project" value="UniProtKB-UniPathway"/>
</dbReference>
<dbReference type="CDD" id="cd01080">
    <property type="entry name" value="NAD_bind_m-THF_DH_Cyclohyd"/>
    <property type="match status" value="1"/>
</dbReference>
<dbReference type="FunFam" id="3.40.50.720:FF:000006">
    <property type="entry name" value="Bifunctional protein FolD"/>
    <property type="match status" value="1"/>
</dbReference>
<dbReference type="FunFam" id="3.40.50.10860:FF:000049">
    <property type="entry name" value="Bifunctional protein FolD 3, chloroplastic"/>
    <property type="match status" value="1"/>
</dbReference>
<dbReference type="Gene3D" id="3.40.50.10860">
    <property type="entry name" value="Leucine Dehydrogenase, chain A, domain 1"/>
    <property type="match status" value="1"/>
</dbReference>
<dbReference type="Gene3D" id="3.40.50.720">
    <property type="entry name" value="NAD(P)-binding Rossmann-like Domain"/>
    <property type="match status" value="1"/>
</dbReference>
<dbReference type="HAMAP" id="MF_01576">
    <property type="entry name" value="THF_DHG_CYH"/>
    <property type="match status" value="1"/>
</dbReference>
<dbReference type="InterPro" id="IPR046346">
    <property type="entry name" value="Aminoacid_DH-like_N_sf"/>
</dbReference>
<dbReference type="InterPro" id="IPR036291">
    <property type="entry name" value="NAD(P)-bd_dom_sf"/>
</dbReference>
<dbReference type="InterPro" id="IPR000672">
    <property type="entry name" value="THF_DH/CycHdrlase"/>
</dbReference>
<dbReference type="InterPro" id="IPR020630">
    <property type="entry name" value="THF_DH/CycHdrlase_cat_dom"/>
</dbReference>
<dbReference type="InterPro" id="IPR020631">
    <property type="entry name" value="THF_DH/CycHdrlase_NAD-bd_dom"/>
</dbReference>
<dbReference type="PANTHER" id="PTHR48099:SF5">
    <property type="entry name" value="C-1-TETRAHYDROFOLATE SYNTHASE, CYTOPLASMIC"/>
    <property type="match status" value="1"/>
</dbReference>
<dbReference type="PANTHER" id="PTHR48099">
    <property type="entry name" value="C-1-TETRAHYDROFOLATE SYNTHASE, CYTOPLASMIC-RELATED"/>
    <property type="match status" value="1"/>
</dbReference>
<dbReference type="Pfam" id="PF00763">
    <property type="entry name" value="THF_DHG_CYH"/>
    <property type="match status" value="1"/>
</dbReference>
<dbReference type="Pfam" id="PF02882">
    <property type="entry name" value="THF_DHG_CYH_C"/>
    <property type="match status" value="1"/>
</dbReference>
<dbReference type="PRINTS" id="PR00085">
    <property type="entry name" value="THFDHDRGNASE"/>
</dbReference>
<dbReference type="SUPFAM" id="SSF53223">
    <property type="entry name" value="Aminoacid dehydrogenase-like, N-terminal domain"/>
    <property type="match status" value="1"/>
</dbReference>
<dbReference type="SUPFAM" id="SSF51735">
    <property type="entry name" value="NAD(P)-binding Rossmann-fold domains"/>
    <property type="match status" value="1"/>
</dbReference>
<proteinExistence type="inferred from homology"/>
<evidence type="ECO:0000250" key="1"/>
<evidence type="ECO:0000255" key="2"/>
<evidence type="ECO:0000305" key="3"/>
<keyword id="KW-0150">Chloroplast</keyword>
<keyword id="KW-0378">Hydrolase</keyword>
<keyword id="KW-0511">Multifunctional enzyme</keyword>
<keyword id="KW-0521">NADP</keyword>
<keyword id="KW-0554">One-carbon metabolism</keyword>
<keyword id="KW-0560">Oxidoreductase</keyword>
<keyword id="KW-0601">Photorespiration</keyword>
<keyword id="KW-0934">Plastid</keyword>
<keyword id="KW-1185">Reference proteome</keyword>
<keyword id="KW-0809">Transit peptide</keyword>